<accession>Q5UQK2</accession>
<organism>
    <name type="scientific">Acanthamoeba polyphaga mimivirus</name>
    <name type="common">APMV</name>
    <dbReference type="NCBI Taxonomy" id="212035"/>
    <lineage>
        <taxon>Viruses</taxon>
        <taxon>Varidnaviria</taxon>
        <taxon>Bamfordvirae</taxon>
        <taxon>Nucleocytoviricota</taxon>
        <taxon>Megaviricetes</taxon>
        <taxon>Imitervirales</taxon>
        <taxon>Mimiviridae</taxon>
        <taxon>Megamimivirinae</taxon>
        <taxon>Mimivirus</taxon>
        <taxon>Mimivirus bradfordmassiliense</taxon>
    </lineage>
</organism>
<organismHost>
    <name type="scientific">Acanthamoeba polyphaga</name>
    <name type="common">Amoeba</name>
    <dbReference type="NCBI Taxonomy" id="5757"/>
</organismHost>
<keyword id="KW-1185">Reference proteome</keyword>
<feature type="chain" id="PRO_0000309195" description="Uncharacterized protein R406">
    <location>
        <begin position="1"/>
        <end position="191"/>
    </location>
</feature>
<feature type="domain" description="Fe2OG dioxygenase" evidence="1">
    <location>
        <begin position="87"/>
        <end position="184"/>
    </location>
</feature>
<name>YR406_MIMIV</name>
<dbReference type="EMBL" id="AY653733">
    <property type="protein sequence ID" value="AAV50675.1"/>
    <property type="molecule type" value="Genomic_DNA"/>
</dbReference>
<dbReference type="SMR" id="Q5UQK2"/>
<dbReference type="KEGG" id="vg:9925027"/>
<dbReference type="OrthoDB" id="15794at10239"/>
<dbReference type="Proteomes" id="UP000001134">
    <property type="component" value="Genome"/>
</dbReference>
<dbReference type="GO" id="GO:0051213">
    <property type="term" value="F:dioxygenase activity"/>
    <property type="evidence" value="ECO:0007669"/>
    <property type="project" value="InterPro"/>
</dbReference>
<dbReference type="GO" id="GO:0006307">
    <property type="term" value="P:DNA alkylation repair"/>
    <property type="evidence" value="ECO:0007669"/>
    <property type="project" value="InterPro"/>
</dbReference>
<dbReference type="Gene3D" id="2.60.120.590">
    <property type="entry name" value="Alpha-ketoglutarate-dependent dioxygenase AlkB-like"/>
    <property type="match status" value="1"/>
</dbReference>
<dbReference type="InterPro" id="IPR027450">
    <property type="entry name" value="AlkB-like"/>
</dbReference>
<dbReference type="InterPro" id="IPR037151">
    <property type="entry name" value="AlkB-like_sf"/>
</dbReference>
<dbReference type="InterPro" id="IPR032854">
    <property type="entry name" value="ALKBH3"/>
</dbReference>
<dbReference type="InterPro" id="IPR005123">
    <property type="entry name" value="Oxoglu/Fe-dep_dioxygenase_dom"/>
</dbReference>
<dbReference type="PANTHER" id="PTHR31212">
    <property type="entry name" value="ALPHA-KETOGLUTARATE-DEPENDENT DIOXYGENASE ALKB HOMOLOG 3"/>
    <property type="match status" value="1"/>
</dbReference>
<dbReference type="PANTHER" id="PTHR31212:SF4">
    <property type="entry name" value="ALPHA-KETOGLUTARATE-DEPENDENT DIOXYGENASE ALKB HOMOLOG 3"/>
    <property type="match status" value="1"/>
</dbReference>
<dbReference type="Pfam" id="PF13532">
    <property type="entry name" value="2OG-FeII_Oxy_2"/>
    <property type="match status" value="1"/>
</dbReference>
<dbReference type="SUPFAM" id="SSF51197">
    <property type="entry name" value="Clavaminate synthase-like"/>
    <property type="match status" value="1"/>
</dbReference>
<dbReference type="PROSITE" id="PS51471">
    <property type="entry name" value="FE2OG_OXY"/>
    <property type="match status" value="1"/>
</dbReference>
<reference key="1">
    <citation type="journal article" date="2004" name="Science">
        <title>The 1.2-megabase genome sequence of Mimivirus.</title>
        <authorList>
            <person name="Raoult D."/>
            <person name="Audic S."/>
            <person name="Robert C."/>
            <person name="Abergel C."/>
            <person name="Renesto P."/>
            <person name="Ogata H."/>
            <person name="La Scola B."/>
            <person name="Susan M."/>
            <person name="Claverie J.-M."/>
        </authorList>
    </citation>
    <scope>NUCLEOTIDE SEQUENCE [LARGE SCALE GENOMIC DNA]</scope>
    <source>
        <strain>Rowbotham-Bradford</strain>
    </source>
</reference>
<proteinExistence type="predicted"/>
<gene>
    <name type="ordered locus">MIMI_R406</name>
</gene>
<protein>
    <recommendedName>
        <fullName>Uncharacterized protein R406</fullName>
    </recommendedName>
</protein>
<evidence type="ECO:0000255" key="1">
    <source>
        <dbReference type="PROSITE-ProRule" id="PRU00805"/>
    </source>
</evidence>
<sequence>MDSKPYRYISKAINLDLYNELVSEIKPKRELMTVTYSDAKIPERRETAWQTETDISAEYSGKTMDPVPFTPTVHMLKKKIEEIIGVEFDSALIFHYIDGKDSMGYHYDTIGVGRGNHIAGVTFGSSRCLGVRNNETNEKEFFNLGNGDIFYMFDDCQKKYKHAILESKEENPGPRIAITFRQMGPNLSQKN</sequence>